<proteinExistence type="inferred from homology"/>
<feature type="chain" id="PRO_0000165791" description="Probable cytosol aminopeptidase">
    <location>
        <begin position="1"/>
        <end position="500"/>
    </location>
</feature>
<feature type="active site" evidence="1">
    <location>
        <position position="277"/>
    </location>
</feature>
<feature type="active site" evidence="1">
    <location>
        <position position="351"/>
    </location>
</feature>
<feature type="binding site" evidence="1">
    <location>
        <position position="265"/>
    </location>
    <ligand>
        <name>Mn(2+)</name>
        <dbReference type="ChEBI" id="CHEBI:29035"/>
        <label>2</label>
    </ligand>
</feature>
<feature type="binding site" evidence="1">
    <location>
        <position position="270"/>
    </location>
    <ligand>
        <name>Mn(2+)</name>
        <dbReference type="ChEBI" id="CHEBI:29035"/>
        <label>1</label>
    </ligand>
</feature>
<feature type="binding site" evidence="1">
    <location>
        <position position="270"/>
    </location>
    <ligand>
        <name>Mn(2+)</name>
        <dbReference type="ChEBI" id="CHEBI:29035"/>
        <label>2</label>
    </ligand>
</feature>
<feature type="binding site" evidence="1">
    <location>
        <position position="288"/>
    </location>
    <ligand>
        <name>Mn(2+)</name>
        <dbReference type="ChEBI" id="CHEBI:29035"/>
        <label>2</label>
    </ligand>
</feature>
<feature type="binding site" evidence="1">
    <location>
        <position position="347"/>
    </location>
    <ligand>
        <name>Mn(2+)</name>
        <dbReference type="ChEBI" id="CHEBI:29035"/>
        <label>1</label>
    </ligand>
</feature>
<feature type="binding site" evidence="1">
    <location>
        <position position="349"/>
    </location>
    <ligand>
        <name>Mn(2+)</name>
        <dbReference type="ChEBI" id="CHEBI:29035"/>
        <label>1</label>
    </ligand>
</feature>
<feature type="binding site" evidence="1">
    <location>
        <position position="349"/>
    </location>
    <ligand>
        <name>Mn(2+)</name>
        <dbReference type="ChEBI" id="CHEBI:29035"/>
        <label>2</label>
    </ligand>
</feature>
<sequence>MLNVNFVNEESSTNQGLVVFIDEQLKLDSNLIGLDQQHHGLISKTIQNKLQFTGKYGQIKVIPSVIKSGEVRYLIIAGLGNEEKLTEAKIEELGGKILQHATGCKISTIGLKLTNRISRFTSQTFASLVASGAFLASYRFDKYRTTLKEAEKFAVESIEIFTDNSTETAKLFEIKKLIAEAVFFTRDISNEPSNIKTPQVYAERIVDRLEPLGVDVDVIGEREMKNLGMGALLGVGQGSQNESKLVVMEYKGGSKDAPTIALVGKGVIFDTGGISLKPSSDMHLMRYDMGGSAAVVGTIIAVAGQKLPINIVGVVGLVENMPSGNAQRPGDVVTTMSGQTAEVLNTDAEGRLVLADAVWYAQEKFKPKCVIDVATLTGAITIALGNTYAGCFSNNDELADKLIKVGEEVNEKLWRMPLHDEYDAMINSDIADMANIGNVPRAAGSCIAAHFIKRFIKDGVDWAHLDIAGVANSNKASALGPKGAVGYGVRLLEKFIKEYT</sequence>
<comment type="function">
    <text evidence="1">Presumably involved in the processing and regular turnover of intracellular proteins. Catalyzes the removal of unsubstituted N-terminal amino acids from various peptides.</text>
</comment>
<comment type="catalytic activity">
    <reaction evidence="1">
        <text>Release of an N-terminal amino acid, Xaa-|-Yaa-, in which Xaa is preferably Leu, but may be other amino acids including Pro although not Arg or Lys, and Yaa may be Pro. Amino acid amides and methyl esters are also readily hydrolyzed, but rates on arylamides are exceedingly low.</text>
        <dbReference type="EC" id="3.4.11.1"/>
    </reaction>
</comment>
<comment type="catalytic activity">
    <reaction evidence="1">
        <text>Release of an N-terminal amino acid, preferentially leucine, but not glutamic or aspartic acids.</text>
        <dbReference type="EC" id="3.4.11.10"/>
    </reaction>
</comment>
<comment type="cofactor">
    <cofactor evidence="1">
        <name>Mn(2+)</name>
        <dbReference type="ChEBI" id="CHEBI:29035"/>
    </cofactor>
    <text evidence="1">Binds 2 manganese ions per subunit.</text>
</comment>
<comment type="subcellular location">
    <subcellularLocation>
        <location evidence="1">Cytoplasm</location>
    </subcellularLocation>
</comment>
<comment type="similarity">
    <text evidence="1">Belongs to the peptidase M17 family.</text>
</comment>
<gene>
    <name evidence="1" type="primary">pepA</name>
    <name type="ordered locus">RC0184</name>
</gene>
<protein>
    <recommendedName>
        <fullName evidence="1">Probable cytosol aminopeptidase</fullName>
        <ecNumber evidence="1">3.4.11.1</ecNumber>
    </recommendedName>
    <alternativeName>
        <fullName evidence="1">Leucine aminopeptidase</fullName>
        <shortName evidence="1">LAP</shortName>
        <ecNumber evidence="1">3.4.11.10</ecNumber>
    </alternativeName>
    <alternativeName>
        <fullName evidence="1">Leucyl aminopeptidase</fullName>
    </alternativeName>
</protein>
<organism>
    <name type="scientific">Rickettsia conorii (strain ATCC VR-613 / Malish 7)</name>
    <dbReference type="NCBI Taxonomy" id="272944"/>
    <lineage>
        <taxon>Bacteria</taxon>
        <taxon>Pseudomonadati</taxon>
        <taxon>Pseudomonadota</taxon>
        <taxon>Alphaproteobacteria</taxon>
        <taxon>Rickettsiales</taxon>
        <taxon>Rickettsiaceae</taxon>
        <taxon>Rickettsieae</taxon>
        <taxon>Rickettsia</taxon>
        <taxon>spotted fever group</taxon>
    </lineage>
</organism>
<evidence type="ECO:0000255" key="1">
    <source>
        <dbReference type="HAMAP-Rule" id="MF_00181"/>
    </source>
</evidence>
<dbReference type="EC" id="3.4.11.1" evidence="1"/>
<dbReference type="EC" id="3.4.11.10" evidence="1"/>
<dbReference type="EMBL" id="AE006914">
    <property type="protein sequence ID" value="AAL02722.1"/>
    <property type="molecule type" value="Genomic_DNA"/>
</dbReference>
<dbReference type="PIR" id="H97722">
    <property type="entry name" value="H97722"/>
</dbReference>
<dbReference type="RefSeq" id="WP_010976854.1">
    <property type="nucleotide sequence ID" value="NC_003103.1"/>
</dbReference>
<dbReference type="SMR" id="Q92J85"/>
<dbReference type="GeneID" id="928006"/>
<dbReference type="KEGG" id="rco:RC0184"/>
<dbReference type="PATRIC" id="fig|272944.4.peg.213"/>
<dbReference type="HOGENOM" id="CLU_013734_6_0_5"/>
<dbReference type="Proteomes" id="UP000000816">
    <property type="component" value="Chromosome"/>
</dbReference>
<dbReference type="GO" id="GO:0005737">
    <property type="term" value="C:cytoplasm"/>
    <property type="evidence" value="ECO:0007669"/>
    <property type="project" value="UniProtKB-SubCell"/>
</dbReference>
<dbReference type="GO" id="GO:0030145">
    <property type="term" value="F:manganese ion binding"/>
    <property type="evidence" value="ECO:0007669"/>
    <property type="project" value="UniProtKB-UniRule"/>
</dbReference>
<dbReference type="GO" id="GO:0070006">
    <property type="term" value="F:metalloaminopeptidase activity"/>
    <property type="evidence" value="ECO:0007669"/>
    <property type="project" value="InterPro"/>
</dbReference>
<dbReference type="GO" id="GO:0006508">
    <property type="term" value="P:proteolysis"/>
    <property type="evidence" value="ECO:0007669"/>
    <property type="project" value="UniProtKB-KW"/>
</dbReference>
<dbReference type="CDD" id="cd00433">
    <property type="entry name" value="Peptidase_M17"/>
    <property type="match status" value="1"/>
</dbReference>
<dbReference type="Gene3D" id="3.40.220.10">
    <property type="entry name" value="Leucine Aminopeptidase, subunit E, domain 1"/>
    <property type="match status" value="1"/>
</dbReference>
<dbReference type="Gene3D" id="3.40.630.10">
    <property type="entry name" value="Zn peptidases"/>
    <property type="match status" value="1"/>
</dbReference>
<dbReference type="HAMAP" id="MF_00181">
    <property type="entry name" value="Cytosol_peptidase_M17"/>
    <property type="match status" value="1"/>
</dbReference>
<dbReference type="InterPro" id="IPR011356">
    <property type="entry name" value="Leucine_aapep/pepB"/>
</dbReference>
<dbReference type="InterPro" id="IPR043472">
    <property type="entry name" value="Macro_dom-like"/>
</dbReference>
<dbReference type="InterPro" id="IPR000819">
    <property type="entry name" value="Peptidase_M17_C"/>
</dbReference>
<dbReference type="InterPro" id="IPR023042">
    <property type="entry name" value="Peptidase_M17_leu_NH2_pept"/>
</dbReference>
<dbReference type="InterPro" id="IPR008283">
    <property type="entry name" value="Peptidase_M17_N"/>
</dbReference>
<dbReference type="NCBIfam" id="NF002073">
    <property type="entry name" value="PRK00913.1-2"/>
    <property type="match status" value="1"/>
</dbReference>
<dbReference type="NCBIfam" id="NF002074">
    <property type="entry name" value="PRK00913.1-4"/>
    <property type="match status" value="1"/>
</dbReference>
<dbReference type="NCBIfam" id="NF002075">
    <property type="entry name" value="PRK00913.2-2"/>
    <property type="match status" value="1"/>
</dbReference>
<dbReference type="NCBIfam" id="NF002077">
    <property type="entry name" value="PRK00913.2-4"/>
    <property type="match status" value="1"/>
</dbReference>
<dbReference type="PANTHER" id="PTHR11963:SF23">
    <property type="entry name" value="CYTOSOL AMINOPEPTIDASE"/>
    <property type="match status" value="1"/>
</dbReference>
<dbReference type="PANTHER" id="PTHR11963">
    <property type="entry name" value="LEUCINE AMINOPEPTIDASE-RELATED"/>
    <property type="match status" value="1"/>
</dbReference>
<dbReference type="Pfam" id="PF00883">
    <property type="entry name" value="Peptidase_M17"/>
    <property type="match status" value="1"/>
</dbReference>
<dbReference type="Pfam" id="PF02789">
    <property type="entry name" value="Peptidase_M17_N"/>
    <property type="match status" value="1"/>
</dbReference>
<dbReference type="PRINTS" id="PR00481">
    <property type="entry name" value="LAMNOPPTDASE"/>
</dbReference>
<dbReference type="SUPFAM" id="SSF52949">
    <property type="entry name" value="Macro domain-like"/>
    <property type="match status" value="1"/>
</dbReference>
<dbReference type="SUPFAM" id="SSF53187">
    <property type="entry name" value="Zn-dependent exopeptidases"/>
    <property type="match status" value="1"/>
</dbReference>
<dbReference type="PROSITE" id="PS00631">
    <property type="entry name" value="CYTOSOL_AP"/>
    <property type="match status" value="1"/>
</dbReference>
<name>AMPA_RICCN</name>
<reference key="1">
    <citation type="journal article" date="2001" name="Science">
        <title>Mechanisms of evolution in Rickettsia conorii and R. prowazekii.</title>
        <authorList>
            <person name="Ogata H."/>
            <person name="Audic S."/>
            <person name="Renesto-Audiffren P."/>
            <person name="Fournier P.-E."/>
            <person name="Barbe V."/>
            <person name="Samson D."/>
            <person name="Roux V."/>
            <person name="Cossart P."/>
            <person name="Weissenbach J."/>
            <person name="Claverie J.-M."/>
            <person name="Raoult D."/>
        </authorList>
    </citation>
    <scope>NUCLEOTIDE SEQUENCE [LARGE SCALE GENOMIC DNA]</scope>
    <source>
        <strain>ATCC VR-613 / Malish 7</strain>
    </source>
</reference>
<accession>Q92J85</accession>
<keyword id="KW-0031">Aminopeptidase</keyword>
<keyword id="KW-0963">Cytoplasm</keyword>
<keyword id="KW-0378">Hydrolase</keyword>
<keyword id="KW-0464">Manganese</keyword>
<keyword id="KW-0479">Metal-binding</keyword>
<keyword id="KW-0645">Protease</keyword>